<reference key="1">
    <citation type="journal article" date="2009" name="Appl. Environ. Microbiol.">
        <title>Novel features of the polysaccharide-digesting gliding bacterium Flavobacterium johnsoniae as revealed by genome sequence analysis.</title>
        <authorList>
            <person name="McBride M.J."/>
            <person name="Xie G."/>
            <person name="Martens E.C."/>
            <person name="Lapidus A."/>
            <person name="Henrissat B."/>
            <person name="Rhodes R.G."/>
            <person name="Goltsman E."/>
            <person name="Wang W."/>
            <person name="Xu J."/>
            <person name="Hunnicutt D.W."/>
            <person name="Staroscik A.M."/>
            <person name="Hoover T.R."/>
            <person name="Cheng Y.Q."/>
            <person name="Stein J.L."/>
        </authorList>
    </citation>
    <scope>NUCLEOTIDE SEQUENCE [LARGE SCALE GENOMIC DNA]</scope>
    <source>
        <strain>ATCC 17061 / DSM 2064 / JCM 8514 / BCRC 14874 / CCUG 350202 / NBRC 14942 / NCIMB 11054 / UW101</strain>
    </source>
</reference>
<feature type="chain" id="PRO_0000344579" description="L-rhamnose mutarotase">
    <location>
        <begin position="1"/>
        <end position="107"/>
    </location>
</feature>
<feature type="region of interest" description="Disordered" evidence="2">
    <location>
        <begin position="88"/>
        <end position="107"/>
    </location>
</feature>
<feature type="compositionally biased region" description="Polar residues" evidence="2">
    <location>
        <begin position="90"/>
        <end position="100"/>
    </location>
</feature>
<feature type="active site" description="Proton donor" evidence="1">
    <location>
        <position position="25"/>
    </location>
</feature>
<feature type="binding site" evidence="1">
    <location>
        <position position="21"/>
    </location>
    <ligand>
        <name>substrate</name>
    </ligand>
</feature>
<feature type="binding site" evidence="1">
    <location>
        <position position="44"/>
    </location>
    <ligand>
        <name>substrate</name>
    </ligand>
</feature>
<feature type="binding site" evidence="1">
    <location>
        <begin position="79"/>
        <end position="80"/>
    </location>
    <ligand>
        <name>substrate</name>
    </ligand>
</feature>
<comment type="function">
    <text evidence="1">Involved in the anomeric conversion of L-rhamnose.</text>
</comment>
<comment type="catalytic activity">
    <reaction evidence="1">
        <text>alpha-L-rhamnose = beta-L-rhamnose</text>
        <dbReference type="Rhea" id="RHEA:25584"/>
        <dbReference type="ChEBI" id="CHEBI:27586"/>
        <dbReference type="ChEBI" id="CHEBI:27907"/>
        <dbReference type="EC" id="5.1.3.32"/>
    </reaction>
</comment>
<comment type="pathway">
    <text evidence="1">Carbohydrate metabolism; L-rhamnose metabolism.</text>
</comment>
<comment type="subunit">
    <text evidence="1">Homodimer.</text>
</comment>
<comment type="subcellular location">
    <subcellularLocation>
        <location evidence="1">Cytoplasm</location>
    </subcellularLocation>
</comment>
<comment type="similarity">
    <text evidence="1">Belongs to the rhamnose mutarotase family.</text>
</comment>
<dbReference type="EC" id="5.1.3.32" evidence="1"/>
<dbReference type="EMBL" id="CP000685">
    <property type="protein sequence ID" value="ABQ07238.1"/>
    <property type="molecule type" value="Genomic_DNA"/>
</dbReference>
<dbReference type="RefSeq" id="WP_012026204.1">
    <property type="nucleotide sequence ID" value="NC_009441.1"/>
</dbReference>
<dbReference type="SMR" id="A5FC30"/>
<dbReference type="STRING" id="376686.Fjoh_4230"/>
<dbReference type="KEGG" id="fjo:Fjoh_4230"/>
<dbReference type="eggNOG" id="COG3254">
    <property type="taxonomic scope" value="Bacteria"/>
</dbReference>
<dbReference type="HOGENOM" id="CLU_100689_2_0_10"/>
<dbReference type="OrthoDB" id="9799608at2"/>
<dbReference type="UniPathway" id="UPA00125"/>
<dbReference type="Proteomes" id="UP000006694">
    <property type="component" value="Chromosome"/>
</dbReference>
<dbReference type="GO" id="GO:0005737">
    <property type="term" value="C:cytoplasm"/>
    <property type="evidence" value="ECO:0007669"/>
    <property type="project" value="UniProtKB-SubCell"/>
</dbReference>
<dbReference type="GO" id="GO:0062192">
    <property type="term" value="F:L-rhamnose mutarotase activity"/>
    <property type="evidence" value="ECO:0007669"/>
    <property type="project" value="UniProtKB-EC"/>
</dbReference>
<dbReference type="GO" id="GO:0019301">
    <property type="term" value="P:rhamnose catabolic process"/>
    <property type="evidence" value="ECO:0007669"/>
    <property type="project" value="TreeGrafter"/>
</dbReference>
<dbReference type="Gene3D" id="3.30.70.100">
    <property type="match status" value="1"/>
</dbReference>
<dbReference type="HAMAP" id="MF_01663">
    <property type="entry name" value="L_rham_rotase"/>
    <property type="match status" value="1"/>
</dbReference>
<dbReference type="InterPro" id="IPR011008">
    <property type="entry name" value="Dimeric_a/b-barrel"/>
</dbReference>
<dbReference type="InterPro" id="IPR013448">
    <property type="entry name" value="L-rhamnose_mutarotase"/>
</dbReference>
<dbReference type="InterPro" id="IPR008000">
    <property type="entry name" value="Rham/fucose_mutarotase"/>
</dbReference>
<dbReference type="NCBIfam" id="TIGR02625">
    <property type="entry name" value="YiiL_rotase"/>
    <property type="match status" value="1"/>
</dbReference>
<dbReference type="PANTHER" id="PTHR34389">
    <property type="entry name" value="L-RHAMNOSE MUTAROTASE"/>
    <property type="match status" value="1"/>
</dbReference>
<dbReference type="PANTHER" id="PTHR34389:SF2">
    <property type="entry name" value="L-RHAMNOSE MUTAROTASE"/>
    <property type="match status" value="1"/>
</dbReference>
<dbReference type="Pfam" id="PF05336">
    <property type="entry name" value="rhaM"/>
    <property type="match status" value="1"/>
</dbReference>
<dbReference type="SUPFAM" id="SSF54909">
    <property type="entry name" value="Dimeric alpha+beta barrel"/>
    <property type="match status" value="1"/>
</dbReference>
<organism>
    <name type="scientific">Flavobacterium johnsoniae (strain ATCC 17061 / DSM 2064 / JCM 8514 / BCRC 14874 / CCUG 350202 / NBRC 14942 / NCIMB 11054 / UW101)</name>
    <name type="common">Cytophaga johnsonae</name>
    <dbReference type="NCBI Taxonomy" id="376686"/>
    <lineage>
        <taxon>Bacteria</taxon>
        <taxon>Pseudomonadati</taxon>
        <taxon>Bacteroidota</taxon>
        <taxon>Flavobacteriia</taxon>
        <taxon>Flavobacteriales</taxon>
        <taxon>Flavobacteriaceae</taxon>
        <taxon>Flavobacterium</taxon>
    </lineage>
</organism>
<name>RHAM_FLAJ1</name>
<sequence>MENAIRNAFTMKVKSGFETEYKIRHDQIWPELTALLSESGICDYSIFLDEETGILFGVQKLSSGFDRSQLSSHPLMRKWWNHMSDIMETNPDNSPKTNSLKEVFHLD</sequence>
<gene>
    <name evidence="1" type="primary">rhaM</name>
    <name type="ordered locus">Fjoh_4230</name>
</gene>
<evidence type="ECO:0000255" key="1">
    <source>
        <dbReference type="HAMAP-Rule" id="MF_01663"/>
    </source>
</evidence>
<evidence type="ECO:0000256" key="2">
    <source>
        <dbReference type="SAM" id="MobiDB-lite"/>
    </source>
</evidence>
<proteinExistence type="inferred from homology"/>
<keyword id="KW-0119">Carbohydrate metabolism</keyword>
<keyword id="KW-0963">Cytoplasm</keyword>
<keyword id="KW-0413">Isomerase</keyword>
<keyword id="KW-0684">Rhamnose metabolism</keyword>
<protein>
    <recommendedName>
        <fullName evidence="1">L-rhamnose mutarotase</fullName>
        <ecNumber evidence="1">5.1.3.32</ecNumber>
    </recommendedName>
    <alternativeName>
        <fullName evidence="1">Rhamnose 1-epimerase</fullName>
    </alternativeName>
    <alternativeName>
        <fullName evidence="1">Type-3 mutarotase</fullName>
    </alternativeName>
</protein>
<accession>A5FC30</accession>